<comment type="function">
    <text evidence="1">This is one of the proteins that bind and probably mediate the attachment of the 5S RNA into the large ribosomal subunit, where it forms part of the central protuberance. In the 70S ribosome it contacts protein S13 of the 30S subunit (bridge B1b), connecting the 2 subunits; this bridge is implicated in subunit movement. Contacts the P site tRNA; the 5S rRNA and some of its associated proteins might help stabilize positioning of ribosome-bound tRNAs.</text>
</comment>
<comment type="subunit">
    <text evidence="1">Part of the 50S ribosomal subunit; part of the 5S rRNA/L5/L18/L25 subcomplex. Contacts the 5S rRNA and the P site tRNA. Forms a bridge to the 30S subunit in the 70S ribosome.</text>
</comment>
<comment type="similarity">
    <text evidence="1">Belongs to the universal ribosomal protein uL5 family.</text>
</comment>
<organism>
    <name type="scientific">Dehalococcoides mccartyi (strain ATCC BAA-2266 / KCTC 15142 / 195)</name>
    <name type="common">Dehalococcoides ethenogenes (strain 195)</name>
    <dbReference type="NCBI Taxonomy" id="243164"/>
    <lineage>
        <taxon>Bacteria</taxon>
        <taxon>Bacillati</taxon>
        <taxon>Chloroflexota</taxon>
        <taxon>Dehalococcoidia</taxon>
        <taxon>Dehalococcoidales</taxon>
        <taxon>Dehalococcoidaceae</taxon>
        <taxon>Dehalococcoides</taxon>
    </lineage>
</organism>
<protein>
    <recommendedName>
        <fullName evidence="1">Large ribosomal subunit protein uL5</fullName>
    </recommendedName>
    <alternativeName>
        <fullName evidence="2">50S ribosomal protein L5</fullName>
    </alternativeName>
</protein>
<reference key="1">
    <citation type="journal article" date="2005" name="Science">
        <title>Genome sequence of the PCE-dechlorinating bacterium Dehalococcoides ethenogenes.</title>
        <authorList>
            <person name="Seshadri R."/>
            <person name="Adrian L."/>
            <person name="Fouts D.E."/>
            <person name="Eisen J.A."/>
            <person name="Phillippy A.M."/>
            <person name="Methe B.A."/>
            <person name="Ward N.L."/>
            <person name="Nelson W.C."/>
            <person name="DeBoy R.T."/>
            <person name="Khouri H.M."/>
            <person name="Kolonay J.F."/>
            <person name="Dodson R.J."/>
            <person name="Daugherty S.C."/>
            <person name="Brinkac L.M."/>
            <person name="Sullivan S.A."/>
            <person name="Madupu R."/>
            <person name="Nelson K.E."/>
            <person name="Kang K.H."/>
            <person name="Impraim M."/>
            <person name="Tran K."/>
            <person name="Robinson J.M."/>
            <person name="Forberger H.A."/>
            <person name="Fraser C.M."/>
            <person name="Zinder S.H."/>
            <person name="Heidelberg J.F."/>
        </authorList>
    </citation>
    <scope>NUCLEOTIDE SEQUENCE [LARGE SCALE GENOMIC DNA]</scope>
    <source>
        <strain>ATCC BAA-2266 / KCTC 15142 / 195</strain>
    </source>
</reference>
<name>RL5_DEHM1</name>
<accession>Q3Z969</accession>
<evidence type="ECO:0000255" key="1">
    <source>
        <dbReference type="HAMAP-Rule" id="MF_01333"/>
    </source>
</evidence>
<evidence type="ECO:0000305" key="2"/>
<feature type="chain" id="PRO_0000242992" description="Large ribosomal subunit protein uL5">
    <location>
        <begin position="1"/>
        <end position="179"/>
    </location>
</feature>
<keyword id="KW-0687">Ribonucleoprotein</keyword>
<keyword id="KW-0689">Ribosomal protein</keyword>
<keyword id="KW-0694">RNA-binding</keyword>
<keyword id="KW-0699">rRNA-binding</keyword>
<keyword id="KW-0820">tRNA-binding</keyword>
<dbReference type="EMBL" id="CP000027">
    <property type="protein sequence ID" value="AAW40279.1"/>
    <property type="molecule type" value="Genomic_DNA"/>
</dbReference>
<dbReference type="RefSeq" id="WP_010936263.1">
    <property type="nucleotide sequence ID" value="NC_002936.3"/>
</dbReference>
<dbReference type="SMR" id="Q3Z969"/>
<dbReference type="FunCoup" id="Q3Z969">
    <property type="interactions" value="346"/>
</dbReference>
<dbReference type="STRING" id="243164.DET0486"/>
<dbReference type="GeneID" id="3230243"/>
<dbReference type="KEGG" id="det:DET0486"/>
<dbReference type="PATRIC" id="fig|243164.10.peg.464"/>
<dbReference type="eggNOG" id="COG0094">
    <property type="taxonomic scope" value="Bacteria"/>
</dbReference>
<dbReference type="HOGENOM" id="CLU_061015_2_1_0"/>
<dbReference type="InParanoid" id="Q3Z969"/>
<dbReference type="Proteomes" id="UP000008289">
    <property type="component" value="Chromosome"/>
</dbReference>
<dbReference type="GO" id="GO:1990904">
    <property type="term" value="C:ribonucleoprotein complex"/>
    <property type="evidence" value="ECO:0007669"/>
    <property type="project" value="UniProtKB-KW"/>
</dbReference>
<dbReference type="GO" id="GO:0005840">
    <property type="term" value="C:ribosome"/>
    <property type="evidence" value="ECO:0007669"/>
    <property type="project" value="UniProtKB-KW"/>
</dbReference>
<dbReference type="GO" id="GO:0019843">
    <property type="term" value="F:rRNA binding"/>
    <property type="evidence" value="ECO:0007669"/>
    <property type="project" value="UniProtKB-UniRule"/>
</dbReference>
<dbReference type="GO" id="GO:0003735">
    <property type="term" value="F:structural constituent of ribosome"/>
    <property type="evidence" value="ECO:0007669"/>
    <property type="project" value="InterPro"/>
</dbReference>
<dbReference type="GO" id="GO:0000049">
    <property type="term" value="F:tRNA binding"/>
    <property type="evidence" value="ECO:0007669"/>
    <property type="project" value="UniProtKB-UniRule"/>
</dbReference>
<dbReference type="GO" id="GO:0006412">
    <property type="term" value="P:translation"/>
    <property type="evidence" value="ECO:0007669"/>
    <property type="project" value="UniProtKB-UniRule"/>
</dbReference>
<dbReference type="FunFam" id="3.30.1440.10:FF:000001">
    <property type="entry name" value="50S ribosomal protein L5"/>
    <property type="match status" value="1"/>
</dbReference>
<dbReference type="Gene3D" id="3.30.1440.10">
    <property type="match status" value="1"/>
</dbReference>
<dbReference type="HAMAP" id="MF_01333_B">
    <property type="entry name" value="Ribosomal_uL5_B"/>
    <property type="match status" value="1"/>
</dbReference>
<dbReference type="InterPro" id="IPR002132">
    <property type="entry name" value="Ribosomal_uL5"/>
</dbReference>
<dbReference type="InterPro" id="IPR020930">
    <property type="entry name" value="Ribosomal_uL5_bac-type"/>
</dbReference>
<dbReference type="InterPro" id="IPR031309">
    <property type="entry name" value="Ribosomal_uL5_C"/>
</dbReference>
<dbReference type="InterPro" id="IPR020929">
    <property type="entry name" value="Ribosomal_uL5_CS"/>
</dbReference>
<dbReference type="InterPro" id="IPR022803">
    <property type="entry name" value="Ribosomal_uL5_dom_sf"/>
</dbReference>
<dbReference type="InterPro" id="IPR031310">
    <property type="entry name" value="Ribosomal_uL5_N"/>
</dbReference>
<dbReference type="NCBIfam" id="NF000585">
    <property type="entry name" value="PRK00010.1"/>
    <property type="match status" value="1"/>
</dbReference>
<dbReference type="PANTHER" id="PTHR11994">
    <property type="entry name" value="60S RIBOSOMAL PROTEIN L11-RELATED"/>
    <property type="match status" value="1"/>
</dbReference>
<dbReference type="Pfam" id="PF00281">
    <property type="entry name" value="Ribosomal_L5"/>
    <property type="match status" value="1"/>
</dbReference>
<dbReference type="Pfam" id="PF00673">
    <property type="entry name" value="Ribosomal_L5_C"/>
    <property type="match status" value="1"/>
</dbReference>
<dbReference type="PIRSF" id="PIRSF002161">
    <property type="entry name" value="Ribosomal_L5"/>
    <property type="match status" value="1"/>
</dbReference>
<dbReference type="SUPFAM" id="SSF55282">
    <property type="entry name" value="RL5-like"/>
    <property type="match status" value="1"/>
</dbReference>
<dbReference type="PROSITE" id="PS00358">
    <property type="entry name" value="RIBOSOMAL_L5"/>
    <property type="match status" value="1"/>
</dbReference>
<proteinExistence type="inferred from homology"/>
<gene>
    <name evidence="1" type="primary">rplE</name>
    <name type="ordered locus">DET0486</name>
</gene>
<sequence>MLKVEERYTNAVPELQKAFKYENIMQVPKLVKVVINTGVGEAVSNSKALETAEADIVAIAGQHPVITRAKRSVANFKLRAGMPIGLKVTLRGQRMYDFLNKLFFITLPRVRDFQGVSNTAFDEHGNYTLGFKDHSVFPEIDFNKIEKPRGLEVCIVTTANTPEEGKKLLELLGMPFSKD</sequence>